<organism>
    <name type="scientific">Streptococcus pneumoniae (strain P1031)</name>
    <dbReference type="NCBI Taxonomy" id="488223"/>
    <lineage>
        <taxon>Bacteria</taxon>
        <taxon>Bacillati</taxon>
        <taxon>Bacillota</taxon>
        <taxon>Bacilli</taxon>
        <taxon>Lactobacillales</taxon>
        <taxon>Streptococcaceae</taxon>
        <taxon>Streptococcus</taxon>
    </lineage>
</organism>
<dbReference type="EC" id="6.1.1.19" evidence="1"/>
<dbReference type="EMBL" id="CP000920">
    <property type="protein sequence ID" value="ACO21508.1"/>
    <property type="molecule type" value="Genomic_DNA"/>
</dbReference>
<dbReference type="RefSeq" id="WP_001092701.1">
    <property type="nucleotide sequence ID" value="NC_012467.1"/>
</dbReference>
<dbReference type="SMR" id="C1CN25"/>
<dbReference type="KEGG" id="spp:SPP_2133"/>
<dbReference type="HOGENOM" id="CLU_006406_6_1_9"/>
<dbReference type="GO" id="GO:0005737">
    <property type="term" value="C:cytoplasm"/>
    <property type="evidence" value="ECO:0007669"/>
    <property type="project" value="UniProtKB-SubCell"/>
</dbReference>
<dbReference type="GO" id="GO:0004814">
    <property type="term" value="F:arginine-tRNA ligase activity"/>
    <property type="evidence" value="ECO:0007669"/>
    <property type="project" value="UniProtKB-UniRule"/>
</dbReference>
<dbReference type="GO" id="GO:0005524">
    <property type="term" value="F:ATP binding"/>
    <property type="evidence" value="ECO:0007669"/>
    <property type="project" value="UniProtKB-UniRule"/>
</dbReference>
<dbReference type="GO" id="GO:0006420">
    <property type="term" value="P:arginyl-tRNA aminoacylation"/>
    <property type="evidence" value="ECO:0007669"/>
    <property type="project" value="UniProtKB-UniRule"/>
</dbReference>
<dbReference type="CDD" id="cd07956">
    <property type="entry name" value="Anticodon_Ia_Arg"/>
    <property type="match status" value="1"/>
</dbReference>
<dbReference type="CDD" id="cd00671">
    <property type="entry name" value="ArgRS_core"/>
    <property type="match status" value="1"/>
</dbReference>
<dbReference type="FunFam" id="1.10.730.10:FF:000034">
    <property type="entry name" value="Arginine--tRNA ligase"/>
    <property type="match status" value="1"/>
</dbReference>
<dbReference type="FunFam" id="3.30.1360.70:FF:000005">
    <property type="entry name" value="Arginine--tRNA ligase"/>
    <property type="match status" value="1"/>
</dbReference>
<dbReference type="FunFam" id="3.40.50.620:FF:000116">
    <property type="entry name" value="Arginine--tRNA ligase"/>
    <property type="match status" value="1"/>
</dbReference>
<dbReference type="Gene3D" id="3.30.1360.70">
    <property type="entry name" value="Arginyl tRNA synthetase N-terminal domain"/>
    <property type="match status" value="1"/>
</dbReference>
<dbReference type="Gene3D" id="3.40.50.620">
    <property type="entry name" value="HUPs"/>
    <property type="match status" value="1"/>
</dbReference>
<dbReference type="Gene3D" id="1.10.730.10">
    <property type="entry name" value="Isoleucyl-tRNA Synthetase, Domain 1"/>
    <property type="match status" value="1"/>
</dbReference>
<dbReference type="HAMAP" id="MF_00123">
    <property type="entry name" value="Arg_tRNA_synth"/>
    <property type="match status" value="1"/>
</dbReference>
<dbReference type="InterPro" id="IPR001278">
    <property type="entry name" value="Arg-tRNA-ligase"/>
</dbReference>
<dbReference type="InterPro" id="IPR005148">
    <property type="entry name" value="Arg-tRNA-synth_N"/>
</dbReference>
<dbReference type="InterPro" id="IPR036695">
    <property type="entry name" value="Arg-tRNA-synth_N_sf"/>
</dbReference>
<dbReference type="InterPro" id="IPR035684">
    <property type="entry name" value="ArgRS_core"/>
</dbReference>
<dbReference type="InterPro" id="IPR008909">
    <property type="entry name" value="DALR_anticod-bd"/>
</dbReference>
<dbReference type="InterPro" id="IPR014729">
    <property type="entry name" value="Rossmann-like_a/b/a_fold"/>
</dbReference>
<dbReference type="InterPro" id="IPR009080">
    <property type="entry name" value="tRNAsynth_Ia_anticodon-bd"/>
</dbReference>
<dbReference type="NCBIfam" id="TIGR00456">
    <property type="entry name" value="argS"/>
    <property type="match status" value="1"/>
</dbReference>
<dbReference type="PANTHER" id="PTHR11956:SF5">
    <property type="entry name" value="ARGININE--TRNA LIGASE, CYTOPLASMIC"/>
    <property type="match status" value="1"/>
</dbReference>
<dbReference type="PANTHER" id="PTHR11956">
    <property type="entry name" value="ARGINYL-TRNA SYNTHETASE"/>
    <property type="match status" value="1"/>
</dbReference>
<dbReference type="Pfam" id="PF03485">
    <property type="entry name" value="Arg_tRNA_synt_N"/>
    <property type="match status" value="1"/>
</dbReference>
<dbReference type="Pfam" id="PF05746">
    <property type="entry name" value="DALR_1"/>
    <property type="match status" value="1"/>
</dbReference>
<dbReference type="Pfam" id="PF00750">
    <property type="entry name" value="tRNA-synt_1d"/>
    <property type="match status" value="1"/>
</dbReference>
<dbReference type="PRINTS" id="PR01038">
    <property type="entry name" value="TRNASYNTHARG"/>
</dbReference>
<dbReference type="SMART" id="SM01016">
    <property type="entry name" value="Arg_tRNA_synt_N"/>
    <property type="match status" value="1"/>
</dbReference>
<dbReference type="SMART" id="SM00836">
    <property type="entry name" value="DALR_1"/>
    <property type="match status" value="1"/>
</dbReference>
<dbReference type="SUPFAM" id="SSF47323">
    <property type="entry name" value="Anticodon-binding domain of a subclass of class I aminoacyl-tRNA synthetases"/>
    <property type="match status" value="1"/>
</dbReference>
<dbReference type="SUPFAM" id="SSF55190">
    <property type="entry name" value="Arginyl-tRNA synthetase (ArgRS), N-terminal 'additional' domain"/>
    <property type="match status" value="1"/>
</dbReference>
<dbReference type="SUPFAM" id="SSF52374">
    <property type="entry name" value="Nucleotidylyl transferase"/>
    <property type="match status" value="1"/>
</dbReference>
<feature type="chain" id="PRO_1000198937" description="Arginine--tRNA ligase">
    <location>
        <begin position="1"/>
        <end position="563"/>
    </location>
</feature>
<feature type="short sequence motif" description="'HIGH' region">
    <location>
        <begin position="121"/>
        <end position="131"/>
    </location>
</feature>
<reference key="1">
    <citation type="journal article" date="2010" name="Genome Biol.">
        <title>Structure and dynamics of the pan-genome of Streptococcus pneumoniae and closely related species.</title>
        <authorList>
            <person name="Donati C."/>
            <person name="Hiller N.L."/>
            <person name="Tettelin H."/>
            <person name="Muzzi A."/>
            <person name="Croucher N.J."/>
            <person name="Angiuoli S.V."/>
            <person name="Oggioni M."/>
            <person name="Dunning Hotopp J.C."/>
            <person name="Hu F.Z."/>
            <person name="Riley D.R."/>
            <person name="Covacci A."/>
            <person name="Mitchell T.J."/>
            <person name="Bentley S.D."/>
            <person name="Kilian M."/>
            <person name="Ehrlich G.D."/>
            <person name="Rappuoli R."/>
            <person name="Moxon E.R."/>
            <person name="Masignani V."/>
        </authorList>
    </citation>
    <scope>NUCLEOTIDE SEQUENCE [LARGE SCALE GENOMIC DNA]</scope>
    <source>
        <strain>P1031</strain>
    </source>
</reference>
<gene>
    <name evidence="1" type="primary">argS</name>
    <name type="ordered locus">SPP_2133</name>
</gene>
<sequence length="563" mass="63442">MNTKELIASELASIIDSLDQEAILKLLETPKNSEMGDIAFPAFSLAKVERKAPQMIAAELAEKMNSQAFEKVVATGPYVNFFLDKSAISAQVLQAVTTEKEHYADQNIGKQENVVIDMSSPNIAKPFSIGHLRSTVIGDSLSHIFQKIGYQTVKVNHLGDWGKQFGMLIVAYKKWGDEEAVKAHPIDELLKLYVRINAEAENDPSLDEEAREWFRKLENGDEEALALWQWFRDESLVEFNRLYNELKVEFDSYNGEAFYNDKMDAVVDILSEKGLLLESEGAQVVNLEKYGIEHPALIKKSDGATLYITRDLAAALYRKNEYQFAKSIYVVGQEQSAHFKQLKAVLQEMGYDWSDDITHVPFGLVTKEGKKLSTRKGNVILLEPTVAEAVSRAKVQIEAKNPELENKDQVAHAVGVGAIKFYDLKTDRTNGYDFDLEAMVSFEGETGPYVQYAYARIQSILRKADFKPETAGNYSLNDTESWEIIKLIQDFPRIINRAADNFEPSIIAKFAISLAQSFNKYYAHTRILDESPERDSRLALSYATAVVLKEALRLLGVEAPEKM</sequence>
<accession>C1CN25</accession>
<proteinExistence type="inferred from homology"/>
<name>SYR_STRZP</name>
<protein>
    <recommendedName>
        <fullName evidence="1">Arginine--tRNA ligase</fullName>
        <ecNumber evidence="1">6.1.1.19</ecNumber>
    </recommendedName>
    <alternativeName>
        <fullName evidence="1">Arginyl-tRNA synthetase</fullName>
        <shortName evidence="1">ArgRS</shortName>
    </alternativeName>
</protein>
<evidence type="ECO:0000255" key="1">
    <source>
        <dbReference type="HAMAP-Rule" id="MF_00123"/>
    </source>
</evidence>
<keyword id="KW-0030">Aminoacyl-tRNA synthetase</keyword>
<keyword id="KW-0067">ATP-binding</keyword>
<keyword id="KW-0963">Cytoplasm</keyword>
<keyword id="KW-0436">Ligase</keyword>
<keyword id="KW-0547">Nucleotide-binding</keyword>
<keyword id="KW-0648">Protein biosynthesis</keyword>
<comment type="catalytic activity">
    <reaction evidence="1">
        <text>tRNA(Arg) + L-arginine + ATP = L-arginyl-tRNA(Arg) + AMP + diphosphate</text>
        <dbReference type="Rhea" id="RHEA:20301"/>
        <dbReference type="Rhea" id="RHEA-COMP:9658"/>
        <dbReference type="Rhea" id="RHEA-COMP:9673"/>
        <dbReference type="ChEBI" id="CHEBI:30616"/>
        <dbReference type="ChEBI" id="CHEBI:32682"/>
        <dbReference type="ChEBI" id="CHEBI:33019"/>
        <dbReference type="ChEBI" id="CHEBI:78442"/>
        <dbReference type="ChEBI" id="CHEBI:78513"/>
        <dbReference type="ChEBI" id="CHEBI:456215"/>
        <dbReference type="EC" id="6.1.1.19"/>
    </reaction>
</comment>
<comment type="subunit">
    <text evidence="1">Monomer.</text>
</comment>
<comment type="subcellular location">
    <subcellularLocation>
        <location evidence="1">Cytoplasm</location>
    </subcellularLocation>
</comment>
<comment type="similarity">
    <text evidence="1">Belongs to the class-I aminoacyl-tRNA synthetase family.</text>
</comment>